<reference evidence="6" key="1">
    <citation type="journal article" date="2008" name="J. Proteomics">
        <title>A proteomics approach to identify proteins differentially expressed in Douglas-fir seedlings infected by Phellinus sulphurascens.</title>
        <authorList>
            <person name="Islam M.A."/>
            <person name="Sturrock R.N."/>
            <person name="Ekramoddoullah A.K.M."/>
        </authorList>
    </citation>
    <scope>IDENTIFICATION BY MASS SPECTROMETRY</scope>
</reference>
<protein>
    <recommendedName>
        <fullName evidence="2">Phosphoglycerate kinase</fullName>
        <ecNumber evidence="1">2.7.2.3</ecNumber>
    </recommendedName>
</protein>
<organism>
    <name type="scientific">Pseudotsuga menziesii</name>
    <name type="common">Douglas-fir</name>
    <name type="synonym">Abies menziesii</name>
    <dbReference type="NCBI Taxonomy" id="3357"/>
    <lineage>
        <taxon>Eukaryota</taxon>
        <taxon>Viridiplantae</taxon>
        <taxon>Streptophyta</taxon>
        <taxon>Embryophyta</taxon>
        <taxon>Tracheophyta</taxon>
        <taxon>Spermatophyta</taxon>
        <taxon>Pinopsida</taxon>
        <taxon>Pinidae</taxon>
        <taxon>Conifers I</taxon>
        <taxon>Pinales</taxon>
        <taxon>Pinaceae</taxon>
        <taxon>Pseudotsuga</taxon>
    </lineage>
</organism>
<dbReference type="EC" id="2.7.2.3" evidence="1"/>
<dbReference type="GO" id="GO:0005524">
    <property type="term" value="F:ATP binding"/>
    <property type="evidence" value="ECO:0007669"/>
    <property type="project" value="UniProtKB-KW"/>
</dbReference>
<dbReference type="GO" id="GO:0004618">
    <property type="term" value="F:phosphoglycerate kinase activity"/>
    <property type="evidence" value="ECO:0007669"/>
    <property type="project" value="UniProtKB-EC"/>
</dbReference>
<keyword id="KW-0067">ATP-binding</keyword>
<keyword id="KW-0418">Kinase</keyword>
<keyword id="KW-0547">Nucleotide-binding</keyword>
<keyword id="KW-0808">Transferase</keyword>
<name>PGK_PSEMZ</name>
<feature type="chain" id="PRO_0000397953" description="Phosphoglycerate kinase">
    <location>
        <begin position="1" status="less than"/>
        <end position="33" status="greater than"/>
    </location>
</feature>
<feature type="binding site" evidence="3">
    <location>
        <position position="13"/>
    </location>
    <ligand>
        <name>AMP</name>
        <dbReference type="ChEBI" id="CHEBI:456215"/>
    </ligand>
</feature>
<feature type="binding site" evidence="3">
    <location>
        <position position="13"/>
    </location>
    <ligand>
        <name>ATP</name>
        <dbReference type="ChEBI" id="CHEBI:30616"/>
    </ligand>
</feature>
<feature type="non-consecutive residues" evidence="5">
    <location>
        <begin position="13"/>
        <end position="14"/>
    </location>
</feature>
<feature type="non-consecutive residues" evidence="5">
    <location>
        <begin position="23"/>
        <end position="24"/>
    </location>
</feature>
<feature type="non-terminal residue" evidence="5">
    <location>
        <position position="1"/>
    </location>
</feature>
<feature type="non-terminal residue" evidence="5">
    <location>
        <position position="33"/>
    </location>
</feature>
<comment type="catalytic activity">
    <reaction evidence="1">
        <text>(2R)-3-phosphoglycerate + ATP = (2R)-3-phospho-glyceroyl phosphate + ADP</text>
        <dbReference type="Rhea" id="RHEA:14801"/>
        <dbReference type="ChEBI" id="CHEBI:30616"/>
        <dbReference type="ChEBI" id="CHEBI:57604"/>
        <dbReference type="ChEBI" id="CHEBI:58272"/>
        <dbReference type="ChEBI" id="CHEBI:456216"/>
        <dbReference type="EC" id="2.7.2.3"/>
    </reaction>
</comment>
<comment type="cofactor">
    <cofactor evidence="1">
        <name>Mg(2+)</name>
        <dbReference type="ChEBI" id="CHEBI:18420"/>
    </cofactor>
</comment>
<comment type="subunit">
    <text evidence="2">Monomer.</text>
</comment>
<comment type="similarity">
    <text evidence="4">Belongs to the phosphoglycerate kinase family.</text>
</comment>
<evidence type="ECO:0000250" key="1">
    <source>
        <dbReference type="UniProtKB" id="P00558"/>
    </source>
</evidence>
<evidence type="ECO:0000250" key="2">
    <source>
        <dbReference type="UniProtKB" id="P12782"/>
    </source>
</evidence>
<evidence type="ECO:0000250" key="3">
    <source>
        <dbReference type="UniProtKB" id="Q7SIB7"/>
    </source>
</evidence>
<evidence type="ECO:0000255" key="4"/>
<evidence type="ECO:0000303" key="5">
    <source>
    </source>
</evidence>
<evidence type="ECO:0000305" key="6"/>
<sequence>FLKPSVAGFLLQKIGVIESLLEKFAVGTESIAK</sequence>
<accession>P85949</accession>
<proteinExistence type="evidence at protein level"/>